<evidence type="ECO:0000255" key="1">
    <source>
        <dbReference type="HAMAP-Rule" id="MF_00445"/>
    </source>
</evidence>
<evidence type="ECO:0000269" key="2">
    <source ref="1"/>
</evidence>
<evidence type="ECO:0000305" key="3"/>
<gene>
    <name evidence="1" type="primary">ndhB2</name>
    <name type="synonym">ndhB-B</name>
    <name type="ordered locus">AtCg01250</name>
</gene>
<accession>P0CC33</accession>
<accession>O47022</accession>
<accession>Q9T3G4</accession>
<reference key="1">
    <citation type="online journal article" date="1998" name="Plant Gene Register">
        <title>Sequence and transcript editing of ndhB gene of Arabidopsis thaliana L. plastid.</title>
        <authorList>
            <person name="del Campo E.M."/>
            <person name="Albertazzi F."/>
            <person name="Freyer R."/>
            <person name="Maier R.M."/>
            <person name="Sabater B."/>
            <person name="Martin M."/>
        </authorList>
        <locator>PGR98-093</locator>
    </citation>
    <scope>NUCLEOTIDE SEQUENCE [GENOMIC DNA]</scope>
    <scope>RNA EDITING</scope>
    <source>
        <strain>cv. Landsberg erecta</strain>
    </source>
</reference>
<reference key="2">
    <citation type="journal article" date="1999" name="DNA Res.">
        <title>Complete structure of the chloroplast genome of Arabidopsis thaliana.</title>
        <authorList>
            <person name="Sato S."/>
            <person name="Nakamura Y."/>
            <person name="Kaneko T."/>
            <person name="Asamizu E."/>
            <person name="Tabata S."/>
        </authorList>
    </citation>
    <scope>NUCLEOTIDE SEQUENCE [LARGE SCALE GENOMIC DNA]</scope>
    <source>
        <strain>cv. Columbia</strain>
    </source>
</reference>
<comment type="function">
    <text evidence="1">NDH shuttles electrons from NAD(P)H:plastoquinone, via FMN and iron-sulfur (Fe-S) centers, to quinones in the photosynthetic chain and possibly in a chloroplast respiratory chain. The immediate electron acceptor for the enzyme in this species is believed to be plastoquinone. Couples the redox reaction to proton translocation, and thus conserves the redox energy in a proton gradient.</text>
</comment>
<comment type="catalytic activity">
    <reaction evidence="1">
        <text>a plastoquinone + NADH + (n+1) H(+)(in) = a plastoquinol + NAD(+) + n H(+)(out)</text>
        <dbReference type="Rhea" id="RHEA:42608"/>
        <dbReference type="Rhea" id="RHEA-COMP:9561"/>
        <dbReference type="Rhea" id="RHEA-COMP:9562"/>
        <dbReference type="ChEBI" id="CHEBI:15378"/>
        <dbReference type="ChEBI" id="CHEBI:17757"/>
        <dbReference type="ChEBI" id="CHEBI:57540"/>
        <dbReference type="ChEBI" id="CHEBI:57945"/>
        <dbReference type="ChEBI" id="CHEBI:62192"/>
    </reaction>
</comment>
<comment type="catalytic activity">
    <reaction evidence="1">
        <text>a plastoquinone + NADPH + (n+1) H(+)(in) = a plastoquinol + NADP(+) + n H(+)(out)</text>
        <dbReference type="Rhea" id="RHEA:42612"/>
        <dbReference type="Rhea" id="RHEA-COMP:9561"/>
        <dbReference type="Rhea" id="RHEA-COMP:9562"/>
        <dbReference type="ChEBI" id="CHEBI:15378"/>
        <dbReference type="ChEBI" id="CHEBI:17757"/>
        <dbReference type="ChEBI" id="CHEBI:57783"/>
        <dbReference type="ChEBI" id="CHEBI:58349"/>
        <dbReference type="ChEBI" id="CHEBI:62192"/>
    </reaction>
</comment>
<comment type="subunit">
    <text evidence="1">NDH is composed of at least 16 different subunits, 5 of which are encoded in the nucleus.</text>
</comment>
<comment type="subcellular location">
    <subcellularLocation>
        <location evidence="1">Plastid</location>
        <location evidence="1">Chloroplast thylakoid membrane</location>
        <topology evidence="1">Multi-pass membrane protein</topology>
    </subcellularLocation>
</comment>
<comment type="RNA editing">
    <location>
        <position position="50" evidence="2"/>
    </location>
    <location>
        <position position="156" evidence="2"/>
    </location>
    <location>
        <position position="196" evidence="2"/>
    </location>
    <location>
        <position position="249" evidence="2"/>
    </location>
    <location>
        <position position="277" evidence="2"/>
    </location>
    <location>
        <position position="279" evidence="2"/>
    </location>
    <location>
        <position position="419" evidence="2"/>
    </location>
    <location>
        <position position="494" evidence="2"/>
    </location>
</comment>
<comment type="similarity">
    <text evidence="1">Belongs to the complex I subunit 2 family.</text>
</comment>
<comment type="sequence caution" evidence="3">
    <conflict type="erroneous initiation">
        <sequence resource="EMBL-CDS" id="BAA84447"/>
    </conflict>
    <text>Truncated N-terminus.</text>
</comment>
<protein>
    <recommendedName>
        <fullName evidence="1">NAD(P)H-quinone oxidoreductase subunit 2 B, chloroplastic</fullName>
        <ecNumber evidence="1">7.1.1.-</ecNumber>
    </recommendedName>
    <alternativeName>
        <fullName evidence="1">NAD(P)H dehydrogenase, subunit 2 B</fullName>
    </alternativeName>
    <alternativeName>
        <fullName evidence="1">NADH-plastoquinone oxidoreductase subunit 2 B</fullName>
    </alternativeName>
</protein>
<dbReference type="EC" id="7.1.1.-" evidence="1"/>
<dbReference type="EMBL" id="AP000423">
    <property type="protein sequence ID" value="BAA84447.1"/>
    <property type="status" value="ALT_SEQ"/>
    <property type="molecule type" value="Genomic_DNA"/>
</dbReference>
<dbReference type="SMR" id="P0CC33"/>
<dbReference type="FunCoup" id="P0CC33">
    <property type="interactions" value="33"/>
</dbReference>
<dbReference type="STRING" id="3702.P0CC33"/>
<dbReference type="KEGG" id="ath:ArthCp086"/>
<dbReference type="Araport" id="ATCG01250"/>
<dbReference type="TAIR" id="ATCG01250"/>
<dbReference type="HOGENOM" id="CLU_007100_1_2_1"/>
<dbReference type="InParanoid" id="P0CC33"/>
<dbReference type="BioCyc" id="ARA:ATCG01250-MONOMER"/>
<dbReference type="PRO" id="PR:P0CC33"/>
<dbReference type="Proteomes" id="UP000006548">
    <property type="component" value="Chloroplast Pltd"/>
</dbReference>
<dbReference type="ExpressionAtlas" id="P0CC33">
    <property type="expression patterns" value="baseline and differential"/>
</dbReference>
<dbReference type="GO" id="GO:0009535">
    <property type="term" value="C:chloroplast thylakoid membrane"/>
    <property type="evidence" value="ECO:0007669"/>
    <property type="project" value="UniProtKB-SubCell"/>
</dbReference>
<dbReference type="GO" id="GO:0008137">
    <property type="term" value="F:NADH dehydrogenase (ubiquinone) activity"/>
    <property type="evidence" value="ECO:0007669"/>
    <property type="project" value="InterPro"/>
</dbReference>
<dbReference type="GO" id="GO:0048038">
    <property type="term" value="F:quinone binding"/>
    <property type="evidence" value="ECO:0007669"/>
    <property type="project" value="UniProtKB-KW"/>
</dbReference>
<dbReference type="GO" id="GO:0042773">
    <property type="term" value="P:ATP synthesis coupled electron transport"/>
    <property type="evidence" value="ECO:0007669"/>
    <property type="project" value="InterPro"/>
</dbReference>
<dbReference type="GO" id="GO:0019684">
    <property type="term" value="P:photosynthesis, light reaction"/>
    <property type="evidence" value="ECO:0007669"/>
    <property type="project" value="UniProtKB-UniRule"/>
</dbReference>
<dbReference type="HAMAP" id="MF_00445">
    <property type="entry name" value="NDH1_NuoN_1"/>
    <property type="match status" value="1"/>
</dbReference>
<dbReference type="InterPro" id="IPR010096">
    <property type="entry name" value="NADH-Q_OxRdtase_suN/2"/>
</dbReference>
<dbReference type="InterPro" id="IPR001750">
    <property type="entry name" value="ND/Mrp_TM"/>
</dbReference>
<dbReference type="InterPro" id="IPR045693">
    <property type="entry name" value="Ndh2_N"/>
</dbReference>
<dbReference type="NCBIfam" id="TIGR01770">
    <property type="entry name" value="NDH_I_N"/>
    <property type="match status" value="1"/>
</dbReference>
<dbReference type="NCBIfam" id="NF002701">
    <property type="entry name" value="PRK02504.1"/>
    <property type="match status" value="1"/>
</dbReference>
<dbReference type="PANTHER" id="PTHR22773">
    <property type="entry name" value="NADH DEHYDROGENASE"/>
    <property type="match status" value="1"/>
</dbReference>
<dbReference type="Pfam" id="PF19530">
    <property type="entry name" value="Ndh2_N"/>
    <property type="match status" value="1"/>
</dbReference>
<dbReference type="Pfam" id="PF00361">
    <property type="entry name" value="Proton_antipo_M"/>
    <property type="match status" value="1"/>
</dbReference>
<dbReference type="PRINTS" id="PR01434">
    <property type="entry name" value="NADHDHGNASE5"/>
</dbReference>
<keyword id="KW-0150">Chloroplast</keyword>
<keyword id="KW-0472">Membrane</keyword>
<keyword id="KW-0520">NAD</keyword>
<keyword id="KW-0521">NADP</keyword>
<keyword id="KW-0934">Plastid</keyword>
<keyword id="KW-0618">Plastoquinone</keyword>
<keyword id="KW-0874">Quinone</keyword>
<keyword id="KW-1185">Reference proteome</keyword>
<keyword id="KW-0691">RNA editing</keyword>
<keyword id="KW-0793">Thylakoid</keyword>
<keyword id="KW-1278">Translocase</keyword>
<keyword id="KW-0812">Transmembrane</keyword>
<keyword id="KW-1133">Transmembrane helix</keyword>
<keyword id="KW-0813">Transport</keyword>
<sequence length="512" mass="57153">MIWHVQNENFILDSTRIFMKAFHLLLFDGSFIFPECILIFGLILLLMIDLTSDQKDIPWLYFISSTSFVMSITALLFRWREEPMISFSGNFQTNNFNEIFQFLILLCSTLCIPLSVEYIECTEMAITEFLLFILTATLGGMFLCGANDLITIFVALECFSLCSYLLSGYTKKDIRSNEATMKYLLMGGASSSILVYGFSWLYGSSGGEIELQEIVNGLINTQMYNSPGISIALIFITVGIGFKLSLAPFHQWTPDVYEGSPTPVVAFLSVTSKVAALALATRIFDIPFYFSSNEWHLLLEILAILSMIFGNLIAITQTSMKRMLAYSSIGQIGYVIIGIIVGDSNGGYASMITYMLFYIAMNLGTFACIILFGLRTGTDNIRDYAGLYTKDPFLALSLALCLLSLGGLPPLAGFFGKLYLFWCGWQAGLYFLVSIGLLTSVLSIYYYLKIIKLLMTGRNQEITPHMRNYRISPLRSNNSIELSMIVCVIASTILGISMNPIIAIAQDTLFSF</sequence>
<feature type="chain" id="PRO_0000391254" description="NAD(P)H-quinone oxidoreductase subunit 2 B, chloroplastic">
    <location>
        <begin position="1"/>
        <end position="512"/>
    </location>
</feature>
<feature type="transmembrane region" description="Helical" evidence="1">
    <location>
        <begin position="31"/>
        <end position="51"/>
    </location>
</feature>
<feature type="transmembrane region" description="Helical" evidence="1">
    <location>
        <begin position="57"/>
        <end position="77"/>
    </location>
</feature>
<feature type="transmembrane region" description="Helical" evidence="1">
    <location>
        <begin position="99"/>
        <end position="119"/>
    </location>
</feature>
<feature type="transmembrane region" description="Helical" evidence="1">
    <location>
        <begin position="124"/>
        <end position="144"/>
    </location>
</feature>
<feature type="transmembrane region" description="Helical" evidence="1">
    <location>
        <begin position="149"/>
        <end position="169"/>
    </location>
</feature>
<feature type="transmembrane region" description="Helical" evidence="1">
    <location>
        <begin position="183"/>
        <end position="203"/>
    </location>
</feature>
<feature type="transmembrane region" description="Helical" evidence="1">
    <location>
        <begin position="229"/>
        <end position="249"/>
    </location>
</feature>
<feature type="transmembrane region" description="Helical" evidence="1">
    <location>
        <begin position="261"/>
        <end position="281"/>
    </location>
</feature>
<feature type="transmembrane region" description="Helical" evidence="1">
    <location>
        <begin position="295"/>
        <end position="315"/>
    </location>
</feature>
<feature type="transmembrane region" description="Helical" evidence="1">
    <location>
        <begin position="323"/>
        <end position="343"/>
    </location>
</feature>
<feature type="transmembrane region" description="Helical" evidence="1">
    <location>
        <begin position="354"/>
        <end position="374"/>
    </location>
</feature>
<feature type="transmembrane region" description="Helical" evidence="1">
    <location>
        <begin position="395"/>
        <end position="415"/>
    </location>
</feature>
<feature type="transmembrane region" description="Helical" evidence="1">
    <location>
        <begin position="418"/>
        <end position="438"/>
    </location>
</feature>
<feature type="transmembrane region" description="Helical" evidence="1">
    <location>
        <begin position="484"/>
        <end position="504"/>
    </location>
</feature>
<organism>
    <name type="scientific">Arabidopsis thaliana</name>
    <name type="common">Mouse-ear cress</name>
    <dbReference type="NCBI Taxonomy" id="3702"/>
    <lineage>
        <taxon>Eukaryota</taxon>
        <taxon>Viridiplantae</taxon>
        <taxon>Streptophyta</taxon>
        <taxon>Embryophyta</taxon>
        <taxon>Tracheophyta</taxon>
        <taxon>Spermatophyta</taxon>
        <taxon>Magnoliopsida</taxon>
        <taxon>eudicotyledons</taxon>
        <taxon>Gunneridae</taxon>
        <taxon>Pentapetalae</taxon>
        <taxon>rosids</taxon>
        <taxon>malvids</taxon>
        <taxon>Brassicales</taxon>
        <taxon>Brassicaceae</taxon>
        <taxon>Camelineae</taxon>
        <taxon>Arabidopsis</taxon>
    </lineage>
</organism>
<name>NU2C2_ARATH</name>
<proteinExistence type="evidence at transcript level"/>
<geneLocation type="chloroplast"/>